<proteinExistence type="inferred from homology"/>
<dbReference type="EMBL" id="M96819">
    <property type="protein sequence ID" value="AAA29128.1"/>
    <property type="molecule type" value="Genomic_DNA"/>
</dbReference>
<dbReference type="PIR" id="S35525">
    <property type="entry name" value="S35525"/>
</dbReference>
<dbReference type="SMR" id="Q06183"/>
<dbReference type="OrthoDB" id="2186770at2759"/>
<dbReference type="GO" id="GO:0000783">
    <property type="term" value="C:nuclear telomere cap complex"/>
    <property type="evidence" value="ECO:0007669"/>
    <property type="project" value="TreeGrafter"/>
</dbReference>
<dbReference type="GO" id="GO:0098505">
    <property type="term" value="F:G-rich strand telomeric DNA binding"/>
    <property type="evidence" value="ECO:0007669"/>
    <property type="project" value="TreeGrafter"/>
</dbReference>
<dbReference type="GO" id="GO:0010521">
    <property type="term" value="F:telomerase inhibitor activity"/>
    <property type="evidence" value="ECO:0007669"/>
    <property type="project" value="TreeGrafter"/>
</dbReference>
<dbReference type="GO" id="GO:0032210">
    <property type="term" value="P:regulation of telomere maintenance via telomerase"/>
    <property type="evidence" value="ECO:0007669"/>
    <property type="project" value="TreeGrafter"/>
</dbReference>
<dbReference type="GO" id="GO:0016233">
    <property type="term" value="P:telomere capping"/>
    <property type="evidence" value="ECO:0007669"/>
    <property type="project" value="InterPro"/>
</dbReference>
<dbReference type="CDD" id="cd04497">
    <property type="entry name" value="hPOT1_OB1_like"/>
    <property type="match status" value="1"/>
</dbReference>
<dbReference type="Gene3D" id="2.40.50.140">
    <property type="entry name" value="Nucleic acid-binding proteins"/>
    <property type="match status" value="3"/>
</dbReference>
<dbReference type="InterPro" id="IPR012340">
    <property type="entry name" value="NA-bd_OB-fold"/>
</dbReference>
<dbReference type="InterPro" id="IPR028389">
    <property type="entry name" value="POT1"/>
</dbReference>
<dbReference type="InterPro" id="IPR053979">
    <property type="entry name" value="TEBP-like_OB2"/>
</dbReference>
<dbReference type="InterPro" id="IPR011564">
    <property type="entry name" value="Telomer_end-bd_POT1/Cdc13"/>
</dbReference>
<dbReference type="InterPro" id="IPR003415">
    <property type="entry name" value="Telomere-bd_alpha"/>
</dbReference>
<dbReference type="PANTHER" id="PTHR14513">
    <property type="entry name" value="PROTECTION OF TELOMERES 1"/>
    <property type="match status" value="1"/>
</dbReference>
<dbReference type="PANTHER" id="PTHR14513:SF0">
    <property type="entry name" value="PROTECTION OF TELOMERES PROTEIN 1"/>
    <property type="match status" value="1"/>
</dbReference>
<dbReference type="Pfam" id="PF02765">
    <property type="entry name" value="POT1"/>
    <property type="match status" value="2"/>
</dbReference>
<dbReference type="Pfam" id="PF22236">
    <property type="entry name" value="TEBP_OB2-like"/>
    <property type="match status" value="1"/>
</dbReference>
<dbReference type="PIRSF" id="PIRSF015848">
    <property type="entry name" value="TEBP_alpha"/>
    <property type="match status" value="1"/>
</dbReference>
<dbReference type="SMART" id="SM00976">
    <property type="entry name" value="Telo_bind"/>
    <property type="match status" value="1"/>
</dbReference>
<dbReference type="SUPFAM" id="SSF50249">
    <property type="entry name" value="Nucleic acid-binding proteins"/>
    <property type="match status" value="3"/>
</dbReference>
<keyword id="KW-0158">Chromosome</keyword>
<keyword id="KW-0238">DNA-binding</keyword>
<keyword id="KW-0539">Nucleus</keyword>
<keyword id="KW-0779">Telomere</keyword>
<evidence type="ECO:0000305" key="1"/>
<comment type="function">
    <text>May bind telomeric T4G4 sequences.</text>
</comment>
<comment type="subcellular location">
    <subcellularLocation>
        <location evidence="1">Nucleus</location>
    </subcellularLocation>
    <subcellularLocation>
        <location evidence="1">Chromosome</location>
        <location evidence="1">Telomere</location>
    </subcellularLocation>
</comment>
<comment type="similarity">
    <text evidence="1">Belongs to the telombin family.</text>
</comment>
<accession>Q06183</accession>
<reference key="1">
    <citation type="journal article" date="1992" name="Nucleic Acids Res.">
        <title>Euplotes crassus has genes encoding telomere-binding proteins and telomere-binding protein homologs.</title>
        <authorList>
            <person name="Wang W."/>
            <person name="Skopp R."/>
            <person name="Scofield M."/>
            <person name="Price C."/>
        </authorList>
    </citation>
    <scope>NUCLEOTIDE SEQUENCE [GENOMIC DNA]</scope>
</reference>
<organism>
    <name type="scientific">Euplotes crassus</name>
    <dbReference type="NCBI Taxonomy" id="5936"/>
    <lineage>
        <taxon>Eukaryota</taxon>
        <taxon>Sar</taxon>
        <taxon>Alveolata</taxon>
        <taxon>Ciliophora</taxon>
        <taxon>Intramacronucleata</taxon>
        <taxon>Spirotrichea</taxon>
        <taxon>Hypotrichia</taxon>
        <taxon>Euplotida</taxon>
        <taxon>Euplotidae</taxon>
        <taxon>Moneuplotes</taxon>
    </lineage>
</organism>
<sequence length="460" mass="53360">MKRRTDLDTKSSRKVYKKYEYTEIGSIEEENEASINFYAVVIDACFPYKVDEKKYMCYLKVIDTTHNVKEGDDNFAIVALQSRKFEDLPIIQRCGDIIRVHRAEYNYKDDQHYFKLNMSYSSSWALFSADEEVAPEVIKDEGDDFTYRSYAYSGKQYNFDTQDQKLLKNTRAWNKSYFAKNDVIIDEMYTPLSQARQEEGDFNVVGKVTQIVHRDYYTSDLRVKDTSKATWFLTVSRRKFPRLYEGVIIKIRSVNIDSETERERCLELAPHSNIMTFVPFSRLAKSLDSQISLSPDKVDKELIKKVILTEPVLATTTFGDYSELPLTELSEIFEDVTDKDAVFRARFSILKITPDRVEDYVEEYTPKGAPRSKPVYKVQFLIKDPSTALNDNLYKIYLYSHGDLGKEFFPGVDPSSAQTPSGHSKLRKYASTLMKFNVHIDAVLEKVGGAFFIRDTEMKF</sequence>
<name>TEBH_EUPCR</name>
<feature type="chain" id="PRO_0000121734" description="Telomere-binding protein homolog">
    <location>
        <begin position="1"/>
        <end position="460"/>
    </location>
</feature>
<protein>
    <recommendedName>
        <fullName>Telomere-binding protein homolog</fullName>
    </recommendedName>
</protein>